<name>EXGD_ASPFU</name>
<proteinExistence type="inferred from homology"/>
<protein>
    <recommendedName>
        <fullName>Probable glucan 1,3-beta-glucosidase D</fullName>
        <ecNumber>3.2.1.58</ecNumber>
    </recommendedName>
    <alternativeName>
        <fullName>Exo-1,3-beta-glucanase D</fullName>
    </alternativeName>
</protein>
<organism>
    <name type="scientific">Aspergillus fumigatus (strain ATCC MYA-4609 / CBS 101355 / FGSC A1100 / Af293)</name>
    <name type="common">Neosartorya fumigata</name>
    <dbReference type="NCBI Taxonomy" id="330879"/>
    <lineage>
        <taxon>Eukaryota</taxon>
        <taxon>Fungi</taxon>
        <taxon>Dikarya</taxon>
        <taxon>Ascomycota</taxon>
        <taxon>Pezizomycotina</taxon>
        <taxon>Eurotiomycetes</taxon>
        <taxon>Eurotiomycetidae</taxon>
        <taxon>Eurotiales</taxon>
        <taxon>Aspergillaceae</taxon>
        <taxon>Aspergillus</taxon>
        <taxon>Aspergillus subgen. Fumigati</taxon>
    </lineage>
</organism>
<gene>
    <name type="primary">exgD</name>
    <name type="ORF">AFUA_6G09250</name>
</gene>
<dbReference type="EC" id="3.2.1.58"/>
<dbReference type="EMBL" id="AAHF01000006">
    <property type="protein sequence ID" value="EAL88774.1"/>
    <property type="molecule type" value="Genomic_DNA"/>
</dbReference>
<dbReference type="RefSeq" id="XP_750812.1">
    <property type="nucleotide sequence ID" value="XM_745719.1"/>
</dbReference>
<dbReference type="SMR" id="Q4WMP0"/>
<dbReference type="STRING" id="330879.Q4WMP0"/>
<dbReference type="GlyCosmos" id="Q4WMP0">
    <property type="glycosylation" value="10 sites, No reported glycans"/>
</dbReference>
<dbReference type="EnsemblFungi" id="EAL88774">
    <property type="protein sequence ID" value="EAL88774"/>
    <property type="gene ID" value="AFUA_6G09250"/>
</dbReference>
<dbReference type="GeneID" id="3508103"/>
<dbReference type="KEGG" id="afm:AFUA_6G09250"/>
<dbReference type="VEuPathDB" id="FungiDB:Afu6g09250"/>
<dbReference type="eggNOG" id="ENOG502QRG8">
    <property type="taxonomic scope" value="Eukaryota"/>
</dbReference>
<dbReference type="HOGENOM" id="CLU_004624_4_0_1"/>
<dbReference type="InParanoid" id="Q4WMP0"/>
<dbReference type="OMA" id="WYWTWKT"/>
<dbReference type="OrthoDB" id="62120at2759"/>
<dbReference type="Proteomes" id="UP000002530">
    <property type="component" value="Chromosome 6"/>
</dbReference>
<dbReference type="GO" id="GO:0005886">
    <property type="term" value="C:plasma membrane"/>
    <property type="evidence" value="ECO:0007669"/>
    <property type="project" value="UniProtKB-SubCell"/>
</dbReference>
<dbReference type="GO" id="GO:0004338">
    <property type="term" value="F:glucan exo-1,3-beta-glucosidase activity"/>
    <property type="evidence" value="ECO:0000318"/>
    <property type="project" value="GO_Central"/>
</dbReference>
<dbReference type="GO" id="GO:0071555">
    <property type="term" value="P:cell wall organization"/>
    <property type="evidence" value="ECO:0007669"/>
    <property type="project" value="UniProtKB-KW"/>
</dbReference>
<dbReference type="GO" id="GO:0009251">
    <property type="term" value="P:glucan catabolic process"/>
    <property type="evidence" value="ECO:0000318"/>
    <property type="project" value="GO_Central"/>
</dbReference>
<dbReference type="FunFam" id="3.20.20.80:FF:000033">
    <property type="entry name" value="Glucan 1,3-beta-glucosidase A"/>
    <property type="match status" value="1"/>
</dbReference>
<dbReference type="Gene3D" id="3.20.20.80">
    <property type="entry name" value="Glycosidases"/>
    <property type="match status" value="1"/>
</dbReference>
<dbReference type="InterPro" id="IPR001547">
    <property type="entry name" value="Glyco_hydro_5"/>
</dbReference>
<dbReference type="InterPro" id="IPR017853">
    <property type="entry name" value="Glycoside_hydrolase_SF"/>
</dbReference>
<dbReference type="InterPro" id="IPR050386">
    <property type="entry name" value="Glycosyl_hydrolase_5"/>
</dbReference>
<dbReference type="PANTHER" id="PTHR31297:SF34">
    <property type="entry name" value="GLUCAN 1,3-BETA-GLUCOSIDASE 2"/>
    <property type="match status" value="1"/>
</dbReference>
<dbReference type="PANTHER" id="PTHR31297">
    <property type="entry name" value="GLUCAN ENDO-1,6-BETA-GLUCOSIDASE B"/>
    <property type="match status" value="1"/>
</dbReference>
<dbReference type="Pfam" id="PF00150">
    <property type="entry name" value="Cellulase"/>
    <property type="match status" value="1"/>
</dbReference>
<dbReference type="SUPFAM" id="SSF51445">
    <property type="entry name" value="(Trans)glycosidases"/>
    <property type="match status" value="1"/>
</dbReference>
<accession>Q4WMP0</accession>
<comment type="function">
    <text evidence="1">Glucosidase involved in the degradation of cellulosic biomass. Active on lichenan (By similarity).</text>
</comment>
<comment type="catalytic activity">
    <reaction>
        <text>Successive hydrolysis of beta-D-glucose units from the non-reducing ends of (1-&gt;3)-beta-D-glucans, releasing alpha-glucose.</text>
        <dbReference type="EC" id="3.2.1.58"/>
    </reaction>
</comment>
<comment type="subcellular location">
    <subcellularLocation>
        <location evidence="4">Cell membrane</location>
        <topology evidence="4">Single-pass type II membrane protein</topology>
    </subcellularLocation>
</comment>
<comment type="similarity">
    <text evidence="4">Belongs to the glycosyl hydrolase 5 (cellulase A) family.</text>
</comment>
<sequence length="833" mass="94775">MPTHSRSRDRYGGRDSDREARYDYDYARRRYATDDDDDYDDDELEHDLTERRYRRDGYRPPRESRARGYYERDAEGAADEELLGNERDPGPRASRSYGDDYDARRREHSRAREAPRRSERHRDRDREGRSRRRAYEDDGRHRTRDGRRDRGRESDGEARRSRRREAGRETAARKHRSSDSTNSASHLLSADALAKLGAQYEKEERRKREIAKDAAKAERKRQKKLAVVGEETRALRDPPGESHRDRTKARVASGAYLEEGRSPEMRVRHRGGGGPAMEARWRKEGSWGGTMDDSGGGRPFWKRKRWIGLGALIIILVIVIPVAVVVSKKHDNKSDPADSQGTSPGKSNLDGLSHDSIPAYAQGTYLDPWTWYDTTDFNVTFTNETVGGLSIMGLNSTWDDSARPNDNVPPLNEPFPYGSQPIRGVNLGGWLSIEPFIVPSLFDSYSSVSGIIDEWTLSKRLGSSAASTLEKHYATFITEQDFADIRDAGLDHVRIQYSYWAVATYDDDPYVAKISWRYLLRAIEYCRKYGLRVNLDPHGIPGSQNGWNHSGREGVIGWLNGTDGELNRNRSLAVHDSVSKFFAQDRYKNIVTIYGLVNEPLMLSLSIEDVLDWTTEATKLVQKNGITAYVALHDGFLNLSKWKSMLKNRPDKMLLDTHQYTIFNTGQIGLNHTAKVNLICNDWYNMIKEINSTSTGWGPTICGEWSQADTDCAKYLNNVGRGTRWEGTFSLTDSTQYCPTADTGPPCSCANANADVSKYSADYKKFLQTYAEAQMSAFETGQGWFYWTWRTESAAQWSYRTAWKNGFMPAKAYAPSFRCGDAVPDFGDLPEYY</sequence>
<evidence type="ECO:0000250" key="1"/>
<evidence type="ECO:0000255" key="2"/>
<evidence type="ECO:0000256" key="3">
    <source>
        <dbReference type="SAM" id="MobiDB-lite"/>
    </source>
</evidence>
<evidence type="ECO:0000305" key="4"/>
<reference key="1">
    <citation type="journal article" date="2005" name="Nature">
        <title>Genomic sequence of the pathogenic and allergenic filamentous fungus Aspergillus fumigatus.</title>
        <authorList>
            <person name="Nierman W.C."/>
            <person name="Pain A."/>
            <person name="Anderson M.J."/>
            <person name="Wortman J.R."/>
            <person name="Kim H.S."/>
            <person name="Arroyo J."/>
            <person name="Berriman M."/>
            <person name="Abe K."/>
            <person name="Archer D.B."/>
            <person name="Bermejo C."/>
            <person name="Bennett J.W."/>
            <person name="Bowyer P."/>
            <person name="Chen D."/>
            <person name="Collins M."/>
            <person name="Coulsen R."/>
            <person name="Davies R."/>
            <person name="Dyer P.S."/>
            <person name="Farman M.L."/>
            <person name="Fedorova N."/>
            <person name="Fedorova N.D."/>
            <person name="Feldblyum T.V."/>
            <person name="Fischer R."/>
            <person name="Fosker N."/>
            <person name="Fraser A."/>
            <person name="Garcia J.L."/>
            <person name="Garcia M.J."/>
            <person name="Goble A."/>
            <person name="Goldman G.H."/>
            <person name="Gomi K."/>
            <person name="Griffith-Jones S."/>
            <person name="Gwilliam R."/>
            <person name="Haas B.J."/>
            <person name="Haas H."/>
            <person name="Harris D.E."/>
            <person name="Horiuchi H."/>
            <person name="Huang J."/>
            <person name="Humphray S."/>
            <person name="Jimenez J."/>
            <person name="Keller N."/>
            <person name="Khouri H."/>
            <person name="Kitamoto K."/>
            <person name="Kobayashi T."/>
            <person name="Konzack S."/>
            <person name="Kulkarni R."/>
            <person name="Kumagai T."/>
            <person name="Lafton A."/>
            <person name="Latge J.-P."/>
            <person name="Li W."/>
            <person name="Lord A."/>
            <person name="Lu C."/>
            <person name="Majoros W.H."/>
            <person name="May G.S."/>
            <person name="Miller B.L."/>
            <person name="Mohamoud Y."/>
            <person name="Molina M."/>
            <person name="Monod M."/>
            <person name="Mouyna I."/>
            <person name="Mulligan S."/>
            <person name="Murphy L.D."/>
            <person name="O'Neil S."/>
            <person name="Paulsen I."/>
            <person name="Penalva M.A."/>
            <person name="Pertea M."/>
            <person name="Price C."/>
            <person name="Pritchard B.L."/>
            <person name="Quail M.A."/>
            <person name="Rabbinowitsch E."/>
            <person name="Rawlins N."/>
            <person name="Rajandream M.A."/>
            <person name="Reichard U."/>
            <person name="Renauld H."/>
            <person name="Robson G.D."/>
            <person name="Rodriguez de Cordoba S."/>
            <person name="Rodriguez-Pena J.M."/>
            <person name="Ronning C.M."/>
            <person name="Rutter S."/>
            <person name="Salzberg S.L."/>
            <person name="Sanchez M."/>
            <person name="Sanchez-Ferrero J.C."/>
            <person name="Saunders D."/>
            <person name="Seeger K."/>
            <person name="Squares R."/>
            <person name="Squares S."/>
            <person name="Takeuchi M."/>
            <person name="Tekaia F."/>
            <person name="Turner G."/>
            <person name="Vazquez de Aldana C.R."/>
            <person name="Weidman J."/>
            <person name="White O."/>
            <person name="Woodward J.R."/>
            <person name="Yu J.-H."/>
            <person name="Fraser C.M."/>
            <person name="Galagan J.E."/>
            <person name="Asai K."/>
            <person name="Machida M."/>
            <person name="Hall N."/>
            <person name="Barrell B.G."/>
            <person name="Denning D.W."/>
        </authorList>
    </citation>
    <scope>NUCLEOTIDE SEQUENCE [LARGE SCALE GENOMIC DNA]</scope>
    <source>
        <strain>ATCC MYA-4609 / CBS 101355 / FGSC A1100 / Af293</strain>
    </source>
</reference>
<keyword id="KW-0119">Carbohydrate metabolism</keyword>
<keyword id="KW-1003">Cell membrane</keyword>
<keyword id="KW-0961">Cell wall biogenesis/degradation</keyword>
<keyword id="KW-0325">Glycoprotein</keyword>
<keyword id="KW-0326">Glycosidase</keyword>
<keyword id="KW-0378">Hydrolase</keyword>
<keyword id="KW-0472">Membrane</keyword>
<keyword id="KW-0624">Polysaccharide degradation</keyword>
<keyword id="KW-1185">Reference proteome</keyword>
<keyword id="KW-0735">Signal-anchor</keyword>
<keyword id="KW-0812">Transmembrane</keyword>
<keyword id="KW-1133">Transmembrane helix</keyword>
<feature type="chain" id="PRO_0000395164" description="Probable glucan 1,3-beta-glucosidase D">
    <location>
        <begin position="1"/>
        <end position="833"/>
    </location>
</feature>
<feature type="topological domain" description="Cytoplasmic" evidence="2">
    <location>
        <begin position="1"/>
        <end position="305"/>
    </location>
</feature>
<feature type="transmembrane region" description="Helical; Signal-anchor for type II membrane protein" evidence="2">
    <location>
        <begin position="306"/>
        <end position="326"/>
    </location>
</feature>
<feature type="topological domain" description="Extracellular" evidence="2">
    <location>
        <begin position="327"/>
        <end position="833"/>
    </location>
</feature>
<feature type="region of interest" description="Disordered" evidence="3">
    <location>
        <begin position="1"/>
        <end position="228"/>
    </location>
</feature>
<feature type="region of interest" description="Disordered" evidence="3">
    <location>
        <begin position="331"/>
        <end position="353"/>
    </location>
</feature>
<feature type="compositionally biased region" description="Basic and acidic residues" evidence="3">
    <location>
        <begin position="1"/>
        <end position="33"/>
    </location>
</feature>
<feature type="compositionally biased region" description="Acidic residues" evidence="3">
    <location>
        <begin position="34"/>
        <end position="45"/>
    </location>
</feature>
<feature type="compositionally biased region" description="Basic and acidic residues" evidence="3">
    <location>
        <begin position="46"/>
        <end position="75"/>
    </location>
</feature>
<feature type="compositionally biased region" description="Basic and acidic residues" evidence="3">
    <location>
        <begin position="97"/>
        <end position="172"/>
    </location>
</feature>
<feature type="compositionally biased region" description="Low complexity" evidence="3">
    <location>
        <begin position="183"/>
        <end position="196"/>
    </location>
</feature>
<feature type="compositionally biased region" description="Basic and acidic residues" evidence="3">
    <location>
        <begin position="200"/>
        <end position="217"/>
    </location>
</feature>
<feature type="compositionally biased region" description="Polar residues" evidence="3">
    <location>
        <begin position="337"/>
        <end position="346"/>
    </location>
</feature>
<feature type="active site" description="Proton donor" evidence="1">
    <location>
        <position position="599"/>
    </location>
</feature>
<feature type="active site" description="Nucleophile" evidence="1">
    <location>
        <position position="704"/>
    </location>
</feature>
<feature type="glycosylation site" description="N-linked (GlcNAc...) asparagine" evidence="2">
    <location>
        <position position="332"/>
    </location>
</feature>
<feature type="glycosylation site" description="N-linked (GlcNAc...) asparagine" evidence="2">
    <location>
        <position position="378"/>
    </location>
</feature>
<feature type="glycosylation site" description="N-linked (GlcNAc...) asparagine" evidence="2">
    <location>
        <position position="383"/>
    </location>
</feature>
<feature type="glycosylation site" description="N-linked (GlcNAc...) asparagine" evidence="2">
    <location>
        <position position="395"/>
    </location>
</feature>
<feature type="glycosylation site" description="N-linked (GlcNAc...) asparagine" evidence="2">
    <location>
        <position position="548"/>
    </location>
</feature>
<feature type="glycosylation site" description="N-linked (GlcNAc...) asparagine" evidence="2">
    <location>
        <position position="560"/>
    </location>
</feature>
<feature type="glycosylation site" description="N-linked (GlcNAc...) asparagine" evidence="2">
    <location>
        <position position="569"/>
    </location>
</feature>
<feature type="glycosylation site" description="N-linked (GlcNAc...) asparagine" evidence="2">
    <location>
        <position position="638"/>
    </location>
</feature>
<feature type="glycosylation site" description="N-linked (GlcNAc...) asparagine" evidence="2">
    <location>
        <position position="671"/>
    </location>
</feature>
<feature type="glycosylation site" description="N-linked (GlcNAc...) asparagine" evidence="2">
    <location>
        <position position="691"/>
    </location>
</feature>